<sequence length="143" mass="14948">MAPKKKVTGLIKLQINAGAANPAPPIGPALGQHGVNIMEFCKAYNAATESQRGNVIPVEITVYEDRSFTFVLKTPPAAELIKKAAGVAKGSGVPHTTKVGKLTQEQVRAIAEQKMVDLNANDIDAASKIIAGTARSMGITVEA</sequence>
<protein>
    <recommendedName>
        <fullName evidence="1">Large ribosomal subunit protein uL11</fullName>
    </recommendedName>
    <alternativeName>
        <fullName evidence="2">50S ribosomal protein L11</fullName>
    </alternativeName>
</protein>
<organism>
    <name type="scientific">Leifsonia xyli subsp. xyli (strain CTCB07)</name>
    <dbReference type="NCBI Taxonomy" id="281090"/>
    <lineage>
        <taxon>Bacteria</taxon>
        <taxon>Bacillati</taxon>
        <taxon>Actinomycetota</taxon>
        <taxon>Actinomycetes</taxon>
        <taxon>Micrococcales</taxon>
        <taxon>Microbacteriaceae</taxon>
        <taxon>Leifsonia</taxon>
    </lineage>
</organism>
<accession>Q6AH26</accession>
<dbReference type="EMBL" id="AE016822">
    <property type="protein sequence ID" value="AAT88319.1"/>
    <property type="molecule type" value="Genomic_DNA"/>
</dbReference>
<dbReference type="RefSeq" id="WP_011185322.1">
    <property type="nucleotide sequence ID" value="NC_006087.1"/>
</dbReference>
<dbReference type="SMR" id="Q6AH26"/>
<dbReference type="STRING" id="281090.Lxx02910"/>
<dbReference type="KEGG" id="lxx:Lxx02910"/>
<dbReference type="eggNOG" id="COG0080">
    <property type="taxonomic scope" value="Bacteria"/>
</dbReference>
<dbReference type="HOGENOM" id="CLU_074237_2_1_11"/>
<dbReference type="Proteomes" id="UP000001306">
    <property type="component" value="Chromosome"/>
</dbReference>
<dbReference type="GO" id="GO:0022625">
    <property type="term" value="C:cytosolic large ribosomal subunit"/>
    <property type="evidence" value="ECO:0007669"/>
    <property type="project" value="TreeGrafter"/>
</dbReference>
<dbReference type="GO" id="GO:0070180">
    <property type="term" value="F:large ribosomal subunit rRNA binding"/>
    <property type="evidence" value="ECO:0007669"/>
    <property type="project" value="UniProtKB-UniRule"/>
</dbReference>
<dbReference type="GO" id="GO:0003735">
    <property type="term" value="F:structural constituent of ribosome"/>
    <property type="evidence" value="ECO:0007669"/>
    <property type="project" value="InterPro"/>
</dbReference>
<dbReference type="GO" id="GO:0006412">
    <property type="term" value="P:translation"/>
    <property type="evidence" value="ECO:0007669"/>
    <property type="project" value="UniProtKB-UniRule"/>
</dbReference>
<dbReference type="CDD" id="cd00349">
    <property type="entry name" value="Ribosomal_L11"/>
    <property type="match status" value="1"/>
</dbReference>
<dbReference type="FunFam" id="1.10.10.250:FF:000001">
    <property type="entry name" value="50S ribosomal protein L11"/>
    <property type="match status" value="1"/>
</dbReference>
<dbReference type="FunFam" id="3.30.1550.10:FF:000001">
    <property type="entry name" value="50S ribosomal protein L11"/>
    <property type="match status" value="1"/>
</dbReference>
<dbReference type="Gene3D" id="1.10.10.250">
    <property type="entry name" value="Ribosomal protein L11, C-terminal domain"/>
    <property type="match status" value="1"/>
</dbReference>
<dbReference type="Gene3D" id="3.30.1550.10">
    <property type="entry name" value="Ribosomal protein L11/L12, N-terminal domain"/>
    <property type="match status" value="1"/>
</dbReference>
<dbReference type="HAMAP" id="MF_00736">
    <property type="entry name" value="Ribosomal_uL11"/>
    <property type="match status" value="1"/>
</dbReference>
<dbReference type="InterPro" id="IPR000911">
    <property type="entry name" value="Ribosomal_uL11"/>
</dbReference>
<dbReference type="InterPro" id="IPR006519">
    <property type="entry name" value="Ribosomal_uL11_bac-typ"/>
</dbReference>
<dbReference type="InterPro" id="IPR020783">
    <property type="entry name" value="Ribosomal_uL11_C"/>
</dbReference>
<dbReference type="InterPro" id="IPR036769">
    <property type="entry name" value="Ribosomal_uL11_C_sf"/>
</dbReference>
<dbReference type="InterPro" id="IPR020785">
    <property type="entry name" value="Ribosomal_uL11_CS"/>
</dbReference>
<dbReference type="InterPro" id="IPR020784">
    <property type="entry name" value="Ribosomal_uL11_N"/>
</dbReference>
<dbReference type="InterPro" id="IPR036796">
    <property type="entry name" value="Ribosomal_uL11_N_sf"/>
</dbReference>
<dbReference type="NCBIfam" id="TIGR01632">
    <property type="entry name" value="L11_bact"/>
    <property type="match status" value="1"/>
</dbReference>
<dbReference type="PANTHER" id="PTHR11661">
    <property type="entry name" value="60S RIBOSOMAL PROTEIN L12"/>
    <property type="match status" value="1"/>
</dbReference>
<dbReference type="PANTHER" id="PTHR11661:SF1">
    <property type="entry name" value="LARGE RIBOSOMAL SUBUNIT PROTEIN UL11M"/>
    <property type="match status" value="1"/>
</dbReference>
<dbReference type="Pfam" id="PF00298">
    <property type="entry name" value="Ribosomal_L11"/>
    <property type="match status" value="1"/>
</dbReference>
<dbReference type="Pfam" id="PF03946">
    <property type="entry name" value="Ribosomal_L11_N"/>
    <property type="match status" value="1"/>
</dbReference>
<dbReference type="SMART" id="SM00649">
    <property type="entry name" value="RL11"/>
    <property type="match status" value="1"/>
</dbReference>
<dbReference type="SUPFAM" id="SSF54747">
    <property type="entry name" value="Ribosomal L11/L12e N-terminal domain"/>
    <property type="match status" value="1"/>
</dbReference>
<dbReference type="SUPFAM" id="SSF46906">
    <property type="entry name" value="Ribosomal protein L11, C-terminal domain"/>
    <property type="match status" value="1"/>
</dbReference>
<dbReference type="PROSITE" id="PS00359">
    <property type="entry name" value="RIBOSOMAL_L11"/>
    <property type="match status" value="1"/>
</dbReference>
<proteinExistence type="inferred from homology"/>
<comment type="function">
    <text evidence="1">Forms part of the ribosomal stalk which helps the ribosome interact with GTP-bound translation factors.</text>
</comment>
<comment type="subunit">
    <text evidence="1">Part of the ribosomal stalk of the 50S ribosomal subunit. Interacts with L10 and the large rRNA to form the base of the stalk. L10 forms an elongated spine to which L12 dimers bind in a sequential fashion forming a multimeric L10(L12)X complex.</text>
</comment>
<comment type="PTM">
    <text evidence="1">One or more lysine residues are methylated.</text>
</comment>
<comment type="similarity">
    <text evidence="1">Belongs to the universal ribosomal protein uL11 family.</text>
</comment>
<gene>
    <name evidence="1" type="primary">rplK</name>
    <name type="ordered locus">Lxx02910</name>
</gene>
<evidence type="ECO:0000255" key="1">
    <source>
        <dbReference type="HAMAP-Rule" id="MF_00736"/>
    </source>
</evidence>
<evidence type="ECO:0000305" key="2"/>
<keyword id="KW-0488">Methylation</keyword>
<keyword id="KW-1185">Reference proteome</keyword>
<keyword id="KW-0687">Ribonucleoprotein</keyword>
<keyword id="KW-0689">Ribosomal protein</keyword>
<keyword id="KW-0694">RNA-binding</keyword>
<keyword id="KW-0699">rRNA-binding</keyword>
<reference key="1">
    <citation type="journal article" date="2004" name="Mol. Plant Microbe Interact.">
        <title>The genome sequence of the Gram-positive sugarcane pathogen Leifsonia xyli subsp. xyli.</title>
        <authorList>
            <person name="Monteiro-Vitorello C.B."/>
            <person name="Camargo L.E.A."/>
            <person name="Van Sluys M.A."/>
            <person name="Kitajima J.P."/>
            <person name="Truffi D."/>
            <person name="do Amaral A.M."/>
            <person name="Harakava R."/>
            <person name="de Oliveira J.C.F."/>
            <person name="Wood D."/>
            <person name="de Oliveira M.C."/>
            <person name="Miyaki C.Y."/>
            <person name="Takita M.A."/>
            <person name="da Silva A.C.R."/>
            <person name="Furlan L.R."/>
            <person name="Carraro D.M."/>
            <person name="Camarotte G."/>
            <person name="Almeida N.F. Jr."/>
            <person name="Carrer H."/>
            <person name="Coutinho L.L."/>
            <person name="El-Dorry H.A."/>
            <person name="Ferro M.I.T."/>
            <person name="Gagliardi P.R."/>
            <person name="Giglioti E."/>
            <person name="Goldman M.H.S."/>
            <person name="Goldman G.H."/>
            <person name="Kimura E.T."/>
            <person name="Ferro E.S."/>
            <person name="Kuramae E.E."/>
            <person name="Lemos E.G.M."/>
            <person name="Lemos M.V.F."/>
            <person name="Mauro S.M.Z."/>
            <person name="Machado M.A."/>
            <person name="Marino C.L."/>
            <person name="Menck C.F."/>
            <person name="Nunes L.R."/>
            <person name="Oliveira R.C."/>
            <person name="Pereira G.G."/>
            <person name="Siqueira W."/>
            <person name="de Souza A.A."/>
            <person name="Tsai S.M."/>
            <person name="Zanca A.S."/>
            <person name="Simpson A.J.G."/>
            <person name="Brumbley S.M."/>
            <person name="Setubal J.C."/>
        </authorList>
    </citation>
    <scope>NUCLEOTIDE SEQUENCE [LARGE SCALE GENOMIC DNA]</scope>
    <source>
        <strain>CTCB07</strain>
    </source>
</reference>
<name>RL11_LEIXX</name>
<feature type="chain" id="PRO_0000104305" description="Large ribosomal subunit protein uL11">
    <location>
        <begin position="1"/>
        <end position="143"/>
    </location>
</feature>